<comment type="function">
    <text evidence="1">NAD-binding protein involved in the addition of a carboxymethylaminomethyl (cmnm) group at the wobble position (U34) of certain tRNAs, forming tRNA-cmnm(5)s(2)U34.</text>
</comment>
<comment type="cofactor">
    <cofactor evidence="1">
        <name>FAD</name>
        <dbReference type="ChEBI" id="CHEBI:57692"/>
    </cofactor>
</comment>
<comment type="subunit">
    <text evidence="1">Homodimer. Heterotetramer of two MnmE and two MnmG subunits.</text>
</comment>
<comment type="subcellular location">
    <subcellularLocation>
        <location evidence="1">Cytoplasm</location>
    </subcellularLocation>
</comment>
<comment type="similarity">
    <text evidence="1">Belongs to the MnmG family.</text>
</comment>
<evidence type="ECO:0000255" key="1">
    <source>
        <dbReference type="HAMAP-Rule" id="MF_00129"/>
    </source>
</evidence>
<name>MNMG_POLSJ</name>
<gene>
    <name evidence="1" type="primary">mnmG</name>
    <name evidence="1" type="synonym">gidA</name>
    <name type="ordered locus">Bpro_0073</name>
</gene>
<accession>Q12HF2</accession>
<organism>
    <name type="scientific">Polaromonas sp. (strain JS666 / ATCC BAA-500)</name>
    <dbReference type="NCBI Taxonomy" id="296591"/>
    <lineage>
        <taxon>Bacteria</taxon>
        <taxon>Pseudomonadati</taxon>
        <taxon>Pseudomonadota</taxon>
        <taxon>Betaproteobacteria</taxon>
        <taxon>Burkholderiales</taxon>
        <taxon>Comamonadaceae</taxon>
        <taxon>Polaromonas</taxon>
    </lineage>
</organism>
<proteinExistence type="inferred from homology"/>
<feature type="chain" id="PRO_0000345316" description="tRNA uridine 5-carboxymethylaminomethyl modification enzyme MnmG">
    <location>
        <begin position="1"/>
        <end position="673"/>
    </location>
</feature>
<feature type="binding site" evidence="1">
    <location>
        <begin position="17"/>
        <end position="22"/>
    </location>
    <ligand>
        <name>FAD</name>
        <dbReference type="ChEBI" id="CHEBI:57692"/>
    </ligand>
</feature>
<feature type="binding site" evidence="1">
    <location>
        <begin position="284"/>
        <end position="298"/>
    </location>
    <ligand>
        <name>NAD(+)</name>
        <dbReference type="ChEBI" id="CHEBI:57540"/>
    </ligand>
</feature>
<reference key="1">
    <citation type="journal article" date="2008" name="Appl. Environ. Microbiol.">
        <title>The genome of Polaromonas sp. strain JS666: insights into the evolution of a hydrocarbon- and xenobiotic-degrading bacterium, and features of relevance to biotechnology.</title>
        <authorList>
            <person name="Mattes T.E."/>
            <person name="Alexander A.K."/>
            <person name="Richardson P.M."/>
            <person name="Munk A.C."/>
            <person name="Han C.S."/>
            <person name="Stothard P."/>
            <person name="Coleman N.V."/>
        </authorList>
    </citation>
    <scope>NUCLEOTIDE SEQUENCE [LARGE SCALE GENOMIC DNA]</scope>
    <source>
        <strain>JS666 / ATCC BAA-500</strain>
    </source>
</reference>
<sequence length="673" mass="74027">MQSPYIYPQEFDVIVVGGGHAGTEAALASARMGCKTLLLSHNIETLGQMSCNPSIGGIGKGHLVKEVDAMGGAMALATDEGGIQFRILNSSKGPAVRATRAQADRILYKAAIRRRLENQPNLWLFQQAVDDLMVEGDRVVGAVTQVGIRFRSRTVVLTAGTFLDGKIHVGLNNYAAGRAGDPPAVSLSSRLKELKLPQGRLKTGTPPRIDGRTIDFSKCIEQPGDGMPGGTAGPVPVFSFMGGAIPHPQQMPCWITHTNERTHEIIRSGFDRSPMFTGKIDGVGPRYCPSVEDKINRFADKESHQIFLEPEGLTTHEIYPNGISTSLPFDIQYELVRSMAGMENAHILRPGYAIEYDYFDPRALKTTFETRAIGGLFFAGQINGTTGYEEAAAQGMFAGINAALQCRALGGLPNDHGGAWLPRRDEAYLGVLVDDLITKGVTEPYRMFTSRAEYRLMLREDNADMRLTEKGRELGLVDDARWDAFSRKRDAVSRETERLRSLWVNPHNLPLAEAERVLGKSIEREYNLLDLLRRPDVNYAGLMSLEEGKYANPELAAEAAASDDLAKSVIEQIEITAKYAGYIDLQKTEVERAAHYENLKLPTDLDYLQVSALSFEARQTLARHRPETLGMASRISGITPATVSLLLVHLKKNLWKNTVPLKTTDTSTEKAQA</sequence>
<dbReference type="EMBL" id="CP000316">
    <property type="protein sequence ID" value="ABE42040.1"/>
    <property type="molecule type" value="Genomic_DNA"/>
</dbReference>
<dbReference type="RefSeq" id="WP_011481050.1">
    <property type="nucleotide sequence ID" value="NC_007948.1"/>
</dbReference>
<dbReference type="SMR" id="Q12HF2"/>
<dbReference type="STRING" id="296591.Bpro_0073"/>
<dbReference type="KEGG" id="pol:Bpro_0073"/>
<dbReference type="eggNOG" id="COG0445">
    <property type="taxonomic scope" value="Bacteria"/>
</dbReference>
<dbReference type="HOGENOM" id="CLU_007831_2_2_4"/>
<dbReference type="OrthoDB" id="9815560at2"/>
<dbReference type="Proteomes" id="UP000001983">
    <property type="component" value="Chromosome"/>
</dbReference>
<dbReference type="GO" id="GO:0005829">
    <property type="term" value="C:cytosol"/>
    <property type="evidence" value="ECO:0007669"/>
    <property type="project" value="TreeGrafter"/>
</dbReference>
<dbReference type="GO" id="GO:0050660">
    <property type="term" value="F:flavin adenine dinucleotide binding"/>
    <property type="evidence" value="ECO:0007669"/>
    <property type="project" value="UniProtKB-UniRule"/>
</dbReference>
<dbReference type="GO" id="GO:0030488">
    <property type="term" value="P:tRNA methylation"/>
    <property type="evidence" value="ECO:0007669"/>
    <property type="project" value="TreeGrafter"/>
</dbReference>
<dbReference type="GO" id="GO:0002098">
    <property type="term" value="P:tRNA wobble uridine modification"/>
    <property type="evidence" value="ECO:0007669"/>
    <property type="project" value="InterPro"/>
</dbReference>
<dbReference type="FunFam" id="1.10.10.1800:FF:000001">
    <property type="entry name" value="tRNA uridine 5-carboxymethylaminomethyl modification enzyme MnmG"/>
    <property type="match status" value="1"/>
</dbReference>
<dbReference type="FunFam" id="1.10.150.570:FF:000001">
    <property type="entry name" value="tRNA uridine 5-carboxymethylaminomethyl modification enzyme MnmG"/>
    <property type="match status" value="1"/>
</dbReference>
<dbReference type="FunFam" id="3.50.50.60:FF:000002">
    <property type="entry name" value="tRNA uridine 5-carboxymethylaminomethyl modification enzyme MnmG"/>
    <property type="match status" value="1"/>
</dbReference>
<dbReference type="FunFam" id="3.50.50.60:FF:000010">
    <property type="entry name" value="tRNA uridine 5-carboxymethylaminomethyl modification enzyme MnmG"/>
    <property type="match status" value="1"/>
</dbReference>
<dbReference type="Gene3D" id="3.50.50.60">
    <property type="entry name" value="FAD/NAD(P)-binding domain"/>
    <property type="match status" value="2"/>
</dbReference>
<dbReference type="Gene3D" id="1.10.150.570">
    <property type="entry name" value="GidA associated domain, C-terminal subdomain"/>
    <property type="match status" value="1"/>
</dbReference>
<dbReference type="Gene3D" id="1.10.10.1800">
    <property type="entry name" value="tRNA uridine 5-carboxymethylaminomethyl modification enzyme MnmG/GidA"/>
    <property type="match status" value="1"/>
</dbReference>
<dbReference type="HAMAP" id="MF_00129">
    <property type="entry name" value="MnmG_GidA"/>
    <property type="match status" value="1"/>
</dbReference>
<dbReference type="InterPro" id="IPR036188">
    <property type="entry name" value="FAD/NAD-bd_sf"/>
</dbReference>
<dbReference type="InterPro" id="IPR049312">
    <property type="entry name" value="GIDA_C_N"/>
</dbReference>
<dbReference type="InterPro" id="IPR004416">
    <property type="entry name" value="MnmG"/>
</dbReference>
<dbReference type="InterPro" id="IPR002218">
    <property type="entry name" value="MnmG-rel"/>
</dbReference>
<dbReference type="InterPro" id="IPR020595">
    <property type="entry name" value="MnmG-rel_CS"/>
</dbReference>
<dbReference type="InterPro" id="IPR026904">
    <property type="entry name" value="MnmG_C"/>
</dbReference>
<dbReference type="InterPro" id="IPR047001">
    <property type="entry name" value="MnmG_C_subdom"/>
</dbReference>
<dbReference type="InterPro" id="IPR044920">
    <property type="entry name" value="MnmG_C_subdom_sf"/>
</dbReference>
<dbReference type="InterPro" id="IPR040131">
    <property type="entry name" value="MnmG_N"/>
</dbReference>
<dbReference type="NCBIfam" id="TIGR00136">
    <property type="entry name" value="mnmG_gidA"/>
    <property type="match status" value="1"/>
</dbReference>
<dbReference type="PANTHER" id="PTHR11806">
    <property type="entry name" value="GLUCOSE INHIBITED DIVISION PROTEIN A"/>
    <property type="match status" value="1"/>
</dbReference>
<dbReference type="PANTHER" id="PTHR11806:SF0">
    <property type="entry name" value="PROTEIN MTO1 HOMOLOG, MITOCHONDRIAL"/>
    <property type="match status" value="1"/>
</dbReference>
<dbReference type="Pfam" id="PF01134">
    <property type="entry name" value="GIDA"/>
    <property type="match status" value="1"/>
</dbReference>
<dbReference type="Pfam" id="PF21680">
    <property type="entry name" value="GIDA_C_1st"/>
    <property type="match status" value="1"/>
</dbReference>
<dbReference type="Pfam" id="PF13932">
    <property type="entry name" value="SAM_GIDA_C"/>
    <property type="match status" value="1"/>
</dbReference>
<dbReference type="SMART" id="SM01228">
    <property type="entry name" value="GIDA_assoc_3"/>
    <property type="match status" value="1"/>
</dbReference>
<dbReference type="SUPFAM" id="SSF51905">
    <property type="entry name" value="FAD/NAD(P)-binding domain"/>
    <property type="match status" value="1"/>
</dbReference>
<dbReference type="PROSITE" id="PS01280">
    <property type="entry name" value="GIDA_1"/>
    <property type="match status" value="1"/>
</dbReference>
<dbReference type="PROSITE" id="PS01281">
    <property type="entry name" value="GIDA_2"/>
    <property type="match status" value="1"/>
</dbReference>
<keyword id="KW-0963">Cytoplasm</keyword>
<keyword id="KW-0274">FAD</keyword>
<keyword id="KW-0285">Flavoprotein</keyword>
<keyword id="KW-0520">NAD</keyword>
<keyword id="KW-1185">Reference proteome</keyword>
<keyword id="KW-0819">tRNA processing</keyword>
<protein>
    <recommendedName>
        <fullName evidence="1">tRNA uridine 5-carboxymethylaminomethyl modification enzyme MnmG</fullName>
    </recommendedName>
    <alternativeName>
        <fullName evidence="1">Glucose-inhibited division protein A</fullName>
    </alternativeName>
</protein>